<reference key="1">
    <citation type="journal article" date="2008" name="BMC Genomics">
        <title>The genome of Aeromonas salmonicida subsp. salmonicida A449: insights into the evolution of a fish pathogen.</title>
        <authorList>
            <person name="Reith M.E."/>
            <person name="Singh R.K."/>
            <person name="Curtis B."/>
            <person name="Boyd J.M."/>
            <person name="Bouevitch A."/>
            <person name="Kimball J."/>
            <person name="Munholland J."/>
            <person name="Murphy C."/>
            <person name="Sarty D."/>
            <person name="Williams J."/>
            <person name="Nash J.H."/>
            <person name="Johnson S.C."/>
            <person name="Brown L.L."/>
        </authorList>
    </citation>
    <scope>NUCLEOTIDE SEQUENCE [LARGE SCALE GENOMIC DNA]</scope>
    <source>
        <strain>A449</strain>
    </source>
</reference>
<proteinExistence type="inferred from homology"/>
<accession>A4SJ61</accession>
<sequence>MSKITTASLLKMKQDDQKITAITAYDASFAKLFDDEGAHVLLIGDSLGMVLQGGQDTLAVSVDEMVYHTRCVARGASNALIIADMPFMSYATPEQTYQTAARLMAAGARMVKMEGGDWLCDSIRHLTRNGVPVCGHLGLTPQSVHVFGGFKVQGRDEYQAQEIYRQALCLQEAGIQLLVLECVPVALAERITKALRIPVIGIGAGPATDGQILVMHDAFGITSGYVPKFTKNFLAETGDMHAAIRLYVQQVSEGTFPGPEHSFN</sequence>
<feature type="chain" id="PRO_0000297210" description="3-methyl-2-oxobutanoate hydroxymethyltransferase">
    <location>
        <begin position="1"/>
        <end position="264"/>
    </location>
</feature>
<feature type="active site" description="Proton acceptor" evidence="1">
    <location>
        <position position="181"/>
    </location>
</feature>
<feature type="binding site" evidence="1">
    <location>
        <begin position="45"/>
        <end position="46"/>
    </location>
    <ligand>
        <name>3-methyl-2-oxobutanoate</name>
        <dbReference type="ChEBI" id="CHEBI:11851"/>
    </ligand>
</feature>
<feature type="binding site" evidence="1">
    <location>
        <position position="45"/>
    </location>
    <ligand>
        <name>Mg(2+)</name>
        <dbReference type="ChEBI" id="CHEBI:18420"/>
    </ligand>
</feature>
<feature type="binding site" evidence="1">
    <location>
        <position position="84"/>
    </location>
    <ligand>
        <name>3-methyl-2-oxobutanoate</name>
        <dbReference type="ChEBI" id="CHEBI:11851"/>
    </ligand>
</feature>
<feature type="binding site" evidence="1">
    <location>
        <position position="84"/>
    </location>
    <ligand>
        <name>Mg(2+)</name>
        <dbReference type="ChEBI" id="CHEBI:18420"/>
    </ligand>
</feature>
<feature type="binding site" evidence="1">
    <location>
        <position position="112"/>
    </location>
    <ligand>
        <name>3-methyl-2-oxobutanoate</name>
        <dbReference type="ChEBI" id="CHEBI:11851"/>
    </ligand>
</feature>
<feature type="binding site" evidence="1">
    <location>
        <position position="114"/>
    </location>
    <ligand>
        <name>Mg(2+)</name>
        <dbReference type="ChEBI" id="CHEBI:18420"/>
    </ligand>
</feature>
<name>PANB_AERS4</name>
<keyword id="KW-0963">Cytoplasm</keyword>
<keyword id="KW-0460">Magnesium</keyword>
<keyword id="KW-0479">Metal-binding</keyword>
<keyword id="KW-0566">Pantothenate biosynthesis</keyword>
<keyword id="KW-0808">Transferase</keyword>
<evidence type="ECO:0000255" key="1">
    <source>
        <dbReference type="HAMAP-Rule" id="MF_00156"/>
    </source>
</evidence>
<comment type="function">
    <text evidence="1">Catalyzes the reversible reaction in which hydroxymethyl group from 5,10-methylenetetrahydrofolate is transferred onto alpha-ketoisovalerate to form ketopantoate.</text>
</comment>
<comment type="catalytic activity">
    <reaction evidence="1">
        <text>3-methyl-2-oxobutanoate + (6R)-5,10-methylene-5,6,7,8-tetrahydrofolate + H2O = 2-dehydropantoate + (6S)-5,6,7,8-tetrahydrofolate</text>
        <dbReference type="Rhea" id="RHEA:11824"/>
        <dbReference type="ChEBI" id="CHEBI:11561"/>
        <dbReference type="ChEBI" id="CHEBI:11851"/>
        <dbReference type="ChEBI" id="CHEBI:15377"/>
        <dbReference type="ChEBI" id="CHEBI:15636"/>
        <dbReference type="ChEBI" id="CHEBI:57453"/>
        <dbReference type="EC" id="2.1.2.11"/>
    </reaction>
</comment>
<comment type="cofactor">
    <cofactor evidence="1">
        <name>Mg(2+)</name>
        <dbReference type="ChEBI" id="CHEBI:18420"/>
    </cofactor>
    <text evidence="1">Binds 1 Mg(2+) ion per subunit.</text>
</comment>
<comment type="pathway">
    <text evidence="1">Cofactor biosynthesis; (R)-pantothenate biosynthesis; (R)-pantoate from 3-methyl-2-oxobutanoate: step 1/2.</text>
</comment>
<comment type="subunit">
    <text evidence="1">Homodecamer; pentamer of dimers.</text>
</comment>
<comment type="subcellular location">
    <subcellularLocation>
        <location evidence="1">Cytoplasm</location>
    </subcellularLocation>
</comment>
<comment type="similarity">
    <text evidence="1">Belongs to the PanB family.</text>
</comment>
<gene>
    <name evidence="1" type="primary">panB</name>
    <name type="ordered locus">ASA_0779</name>
</gene>
<organism>
    <name type="scientific">Aeromonas salmonicida (strain A449)</name>
    <dbReference type="NCBI Taxonomy" id="382245"/>
    <lineage>
        <taxon>Bacteria</taxon>
        <taxon>Pseudomonadati</taxon>
        <taxon>Pseudomonadota</taxon>
        <taxon>Gammaproteobacteria</taxon>
        <taxon>Aeromonadales</taxon>
        <taxon>Aeromonadaceae</taxon>
        <taxon>Aeromonas</taxon>
    </lineage>
</organism>
<protein>
    <recommendedName>
        <fullName evidence="1">3-methyl-2-oxobutanoate hydroxymethyltransferase</fullName>
        <ecNumber evidence="1">2.1.2.11</ecNumber>
    </recommendedName>
    <alternativeName>
        <fullName evidence="1">Ketopantoate hydroxymethyltransferase</fullName>
        <shortName evidence="1">KPHMT</shortName>
    </alternativeName>
</protein>
<dbReference type="EC" id="2.1.2.11" evidence="1"/>
<dbReference type="EMBL" id="CP000644">
    <property type="protein sequence ID" value="ABO88933.1"/>
    <property type="molecule type" value="Genomic_DNA"/>
</dbReference>
<dbReference type="RefSeq" id="WP_005313192.1">
    <property type="nucleotide sequence ID" value="NC_009348.1"/>
</dbReference>
<dbReference type="SMR" id="A4SJ61"/>
<dbReference type="STRING" id="29491.GCA_000820065_01708"/>
<dbReference type="GeneID" id="79878329"/>
<dbReference type="KEGG" id="asa:ASA_0779"/>
<dbReference type="eggNOG" id="COG0413">
    <property type="taxonomic scope" value="Bacteria"/>
</dbReference>
<dbReference type="HOGENOM" id="CLU_036645_1_0_6"/>
<dbReference type="UniPathway" id="UPA00028">
    <property type="reaction ID" value="UER00003"/>
</dbReference>
<dbReference type="Proteomes" id="UP000000225">
    <property type="component" value="Chromosome"/>
</dbReference>
<dbReference type="GO" id="GO:0005737">
    <property type="term" value="C:cytoplasm"/>
    <property type="evidence" value="ECO:0007669"/>
    <property type="project" value="UniProtKB-SubCell"/>
</dbReference>
<dbReference type="GO" id="GO:0003864">
    <property type="term" value="F:3-methyl-2-oxobutanoate hydroxymethyltransferase activity"/>
    <property type="evidence" value="ECO:0007669"/>
    <property type="project" value="UniProtKB-UniRule"/>
</dbReference>
<dbReference type="GO" id="GO:0000287">
    <property type="term" value="F:magnesium ion binding"/>
    <property type="evidence" value="ECO:0007669"/>
    <property type="project" value="TreeGrafter"/>
</dbReference>
<dbReference type="GO" id="GO:0015940">
    <property type="term" value="P:pantothenate biosynthetic process"/>
    <property type="evidence" value="ECO:0007669"/>
    <property type="project" value="UniProtKB-UniRule"/>
</dbReference>
<dbReference type="CDD" id="cd06557">
    <property type="entry name" value="KPHMT-like"/>
    <property type="match status" value="1"/>
</dbReference>
<dbReference type="FunFam" id="3.20.20.60:FF:000003">
    <property type="entry name" value="3-methyl-2-oxobutanoate hydroxymethyltransferase"/>
    <property type="match status" value="1"/>
</dbReference>
<dbReference type="Gene3D" id="3.20.20.60">
    <property type="entry name" value="Phosphoenolpyruvate-binding domains"/>
    <property type="match status" value="1"/>
</dbReference>
<dbReference type="HAMAP" id="MF_00156">
    <property type="entry name" value="PanB"/>
    <property type="match status" value="1"/>
</dbReference>
<dbReference type="InterPro" id="IPR003700">
    <property type="entry name" value="Pantoate_hydroxy_MeTrfase"/>
</dbReference>
<dbReference type="InterPro" id="IPR015813">
    <property type="entry name" value="Pyrv/PenolPyrv_kinase-like_dom"/>
</dbReference>
<dbReference type="InterPro" id="IPR040442">
    <property type="entry name" value="Pyrv_kinase-like_dom_sf"/>
</dbReference>
<dbReference type="NCBIfam" id="TIGR00222">
    <property type="entry name" value="panB"/>
    <property type="match status" value="1"/>
</dbReference>
<dbReference type="NCBIfam" id="NF001452">
    <property type="entry name" value="PRK00311.1"/>
    <property type="match status" value="1"/>
</dbReference>
<dbReference type="PANTHER" id="PTHR20881">
    <property type="entry name" value="3-METHYL-2-OXOBUTANOATE HYDROXYMETHYLTRANSFERASE"/>
    <property type="match status" value="1"/>
</dbReference>
<dbReference type="PANTHER" id="PTHR20881:SF0">
    <property type="entry name" value="3-METHYL-2-OXOBUTANOATE HYDROXYMETHYLTRANSFERASE"/>
    <property type="match status" value="1"/>
</dbReference>
<dbReference type="Pfam" id="PF02548">
    <property type="entry name" value="Pantoate_transf"/>
    <property type="match status" value="1"/>
</dbReference>
<dbReference type="PIRSF" id="PIRSF000388">
    <property type="entry name" value="Pantoate_hydroxy_MeTrfase"/>
    <property type="match status" value="1"/>
</dbReference>
<dbReference type="SUPFAM" id="SSF51621">
    <property type="entry name" value="Phosphoenolpyruvate/pyruvate domain"/>
    <property type="match status" value="1"/>
</dbReference>